<comment type="function">
    <text evidence="1">Phosphorylates gluconate to 6-phosphogluconate.</text>
</comment>
<comment type="catalytic activity">
    <reaction evidence="1">
        <text>D-gluconate + ATP = 6-phospho-D-gluconate + ADP + H(+)</text>
        <dbReference type="Rhea" id="RHEA:19433"/>
        <dbReference type="ChEBI" id="CHEBI:15378"/>
        <dbReference type="ChEBI" id="CHEBI:18391"/>
        <dbReference type="ChEBI" id="CHEBI:30616"/>
        <dbReference type="ChEBI" id="CHEBI:58759"/>
        <dbReference type="ChEBI" id="CHEBI:456216"/>
        <dbReference type="EC" id="2.7.1.12"/>
    </reaction>
</comment>
<comment type="pathway">
    <text evidence="1">Carbohydrate acid metabolism; D-gluconate degradation.</text>
</comment>
<comment type="subunit">
    <text evidence="1">Monomer.</text>
</comment>
<comment type="similarity">
    <text evidence="4">Belongs to the gluconokinase GntK/GntV family.</text>
</comment>
<protein>
    <recommendedName>
        <fullName evidence="3">Gluconokinase</fullName>
        <ecNumber evidence="1">2.7.1.12</ecNumber>
    </recommendedName>
    <alternativeName>
        <fullName evidence="3">Gluconate kinase</fullName>
    </alternativeName>
</protein>
<gene>
    <name evidence="5" type="ordered locus">At2g16790</name>
    <name evidence="6" type="ORF">T24I21.20</name>
</gene>
<evidence type="ECO:0000250" key="1">
    <source>
        <dbReference type="UniProtKB" id="Q5FQ97"/>
    </source>
</evidence>
<evidence type="ECO:0000255" key="2"/>
<evidence type="ECO:0000303" key="3">
    <source>
    </source>
</evidence>
<evidence type="ECO:0000305" key="4"/>
<evidence type="ECO:0000312" key="5">
    <source>
        <dbReference type="Araport" id="AT2G16790"/>
    </source>
</evidence>
<evidence type="ECO:0000312" key="6">
    <source>
        <dbReference type="EMBL" id="AEC06538.1"/>
    </source>
</evidence>
<proteinExistence type="evidence at transcript level"/>
<name>GNTK_ARATH</name>
<reference key="1">
    <citation type="journal article" date="1999" name="Nature">
        <title>Sequence and analysis of chromosome 2 of the plant Arabidopsis thaliana.</title>
        <authorList>
            <person name="Lin X."/>
            <person name="Kaul S."/>
            <person name="Rounsley S.D."/>
            <person name="Shea T.P."/>
            <person name="Benito M.-I."/>
            <person name="Town C.D."/>
            <person name="Fujii C.Y."/>
            <person name="Mason T.M."/>
            <person name="Bowman C.L."/>
            <person name="Barnstead M.E."/>
            <person name="Feldblyum T.V."/>
            <person name="Buell C.R."/>
            <person name="Ketchum K.A."/>
            <person name="Lee J.J."/>
            <person name="Ronning C.M."/>
            <person name="Koo H.L."/>
            <person name="Moffat K.S."/>
            <person name="Cronin L.A."/>
            <person name="Shen M."/>
            <person name="Pai G."/>
            <person name="Van Aken S."/>
            <person name="Umayam L."/>
            <person name="Tallon L.J."/>
            <person name="Gill J.E."/>
            <person name="Adams M.D."/>
            <person name="Carrera A.J."/>
            <person name="Creasy T.H."/>
            <person name="Goodman H.M."/>
            <person name="Somerville C.R."/>
            <person name="Copenhaver G.P."/>
            <person name="Preuss D."/>
            <person name="Nierman W.C."/>
            <person name="White O."/>
            <person name="Eisen J.A."/>
            <person name="Salzberg S.L."/>
            <person name="Fraser C.M."/>
            <person name="Venter J.C."/>
        </authorList>
    </citation>
    <scope>NUCLEOTIDE SEQUENCE [LARGE SCALE GENOMIC DNA]</scope>
    <source>
        <strain>cv. Columbia</strain>
    </source>
</reference>
<reference key="2">
    <citation type="journal article" date="2017" name="Plant J.">
        <title>Araport11: a complete reannotation of the Arabidopsis thaliana reference genome.</title>
        <authorList>
            <person name="Cheng C.Y."/>
            <person name="Krishnakumar V."/>
            <person name="Chan A.P."/>
            <person name="Thibaud-Nissen F."/>
            <person name="Schobel S."/>
            <person name="Town C.D."/>
        </authorList>
    </citation>
    <scope>GENOME REANNOTATION</scope>
    <source>
        <strain>cv. Columbia</strain>
    </source>
</reference>
<reference key="3">
    <citation type="submission" date="2002-03" db="EMBL/GenBank/DDBJ databases">
        <title>Full-length cDNA from Arabidopsis thaliana.</title>
        <authorList>
            <person name="Brover V.V."/>
            <person name="Troukhan M.E."/>
            <person name="Alexandrov N.A."/>
            <person name="Lu Y.-P."/>
            <person name="Flavell R.B."/>
            <person name="Feldmann K.A."/>
        </authorList>
    </citation>
    <scope>NUCLEOTIDE SEQUENCE [LARGE SCALE MRNA]</scope>
</reference>
<reference key="4">
    <citation type="journal article" date="2002" name="Planta">
        <title>Monitoring flux through the oxidative pentose phosphate pathway using [1-14C]gluconate.</title>
        <authorList>
            <person name="Garlick A.P."/>
            <person name="Moore C."/>
            <person name="Kruger N.J."/>
        </authorList>
    </citation>
    <scope>REVIEW</scope>
</reference>
<sequence length="189" mass="20969">MSAKNDVTGKVIAIMGVSGAGKSTIGKMLGKALSCDFLDADDFHSLSNRDKMRQGIALSDEDRMPWLEKIQESLRKRLLDGETVVLACSSLRKQYREILRGSDPDYKPGSYTSCKVTFVLLEGNAEVIAARLQKRASEEEHFMPLTLLQSQFDLLQADECEKIFKISVVLSPEVIVNTILEMVANSLNP</sequence>
<dbReference type="EC" id="2.7.1.12" evidence="1"/>
<dbReference type="EMBL" id="AC005825">
    <property type="protein sequence ID" value="AAD24612.2"/>
    <property type="molecule type" value="Genomic_DNA"/>
</dbReference>
<dbReference type="EMBL" id="CP002685">
    <property type="protein sequence ID" value="AEC06538.1"/>
    <property type="molecule type" value="Genomic_DNA"/>
</dbReference>
<dbReference type="EMBL" id="CP002685">
    <property type="protein sequence ID" value="ANM63213.1"/>
    <property type="molecule type" value="Genomic_DNA"/>
</dbReference>
<dbReference type="EMBL" id="AY085892">
    <property type="protein sequence ID" value="AAM63104.1"/>
    <property type="molecule type" value="mRNA"/>
</dbReference>
<dbReference type="PIR" id="C84544">
    <property type="entry name" value="C84544"/>
</dbReference>
<dbReference type="RefSeq" id="NP_001325317.1">
    <property type="nucleotide sequence ID" value="NM_001335492.1"/>
</dbReference>
<dbReference type="RefSeq" id="NP_565393.1">
    <property type="nucleotide sequence ID" value="NM_127231.2"/>
</dbReference>
<dbReference type="SMR" id="Q9SLE0"/>
<dbReference type="FunCoup" id="Q9SLE0">
    <property type="interactions" value="1016"/>
</dbReference>
<dbReference type="STRING" id="3702.Q9SLE0"/>
<dbReference type="iPTMnet" id="Q9SLE0"/>
<dbReference type="PaxDb" id="3702-AT2G16790.1"/>
<dbReference type="ProteomicsDB" id="247016"/>
<dbReference type="EnsemblPlants" id="AT2G16790.1">
    <property type="protein sequence ID" value="AT2G16790.1"/>
    <property type="gene ID" value="AT2G16790"/>
</dbReference>
<dbReference type="EnsemblPlants" id="AT2G16790.5">
    <property type="protein sequence ID" value="AT2G16790.5"/>
    <property type="gene ID" value="AT2G16790"/>
</dbReference>
<dbReference type="GeneID" id="816180"/>
<dbReference type="Gramene" id="AT2G16790.1">
    <property type="protein sequence ID" value="AT2G16790.1"/>
    <property type="gene ID" value="AT2G16790"/>
</dbReference>
<dbReference type="Gramene" id="AT2G16790.5">
    <property type="protein sequence ID" value="AT2G16790.5"/>
    <property type="gene ID" value="AT2G16790"/>
</dbReference>
<dbReference type="KEGG" id="ath:AT2G16790"/>
<dbReference type="Araport" id="AT2G16790"/>
<dbReference type="TAIR" id="AT2G16790"/>
<dbReference type="eggNOG" id="KOG3354">
    <property type="taxonomic scope" value="Eukaryota"/>
</dbReference>
<dbReference type="InParanoid" id="Q9SLE0"/>
<dbReference type="OMA" id="HFIYLRA"/>
<dbReference type="PhylomeDB" id="Q9SLE0"/>
<dbReference type="UniPathway" id="UPA00792"/>
<dbReference type="PRO" id="PR:Q9SLE0"/>
<dbReference type="Proteomes" id="UP000006548">
    <property type="component" value="Chromosome 2"/>
</dbReference>
<dbReference type="ExpressionAtlas" id="Q9SLE0">
    <property type="expression patterns" value="baseline and differential"/>
</dbReference>
<dbReference type="GO" id="GO:0005524">
    <property type="term" value="F:ATP binding"/>
    <property type="evidence" value="ECO:0007669"/>
    <property type="project" value="UniProtKB-KW"/>
</dbReference>
<dbReference type="GO" id="GO:0046316">
    <property type="term" value="F:gluconokinase activity"/>
    <property type="evidence" value="ECO:0007669"/>
    <property type="project" value="UniProtKB-EC"/>
</dbReference>
<dbReference type="GO" id="GO:0016787">
    <property type="term" value="F:hydrolase activity"/>
    <property type="evidence" value="ECO:0007669"/>
    <property type="project" value="UniProtKB-KW"/>
</dbReference>
<dbReference type="GO" id="GO:0019521">
    <property type="term" value="P:D-gluconate metabolic process"/>
    <property type="evidence" value="ECO:0007669"/>
    <property type="project" value="UniProtKB-KW"/>
</dbReference>
<dbReference type="CDD" id="cd02021">
    <property type="entry name" value="GntK"/>
    <property type="match status" value="1"/>
</dbReference>
<dbReference type="FunFam" id="3.40.50.300:FF:000522">
    <property type="entry name" value="Gluconokinase"/>
    <property type="match status" value="1"/>
</dbReference>
<dbReference type="Gene3D" id="3.40.50.300">
    <property type="entry name" value="P-loop containing nucleotide triphosphate hydrolases"/>
    <property type="match status" value="1"/>
</dbReference>
<dbReference type="InterPro" id="IPR027417">
    <property type="entry name" value="P-loop_NTPase"/>
</dbReference>
<dbReference type="InterPro" id="IPR031322">
    <property type="entry name" value="Shikimate/glucono_kinase"/>
</dbReference>
<dbReference type="InterPro" id="IPR006001">
    <property type="entry name" value="Therm_gnt_kin"/>
</dbReference>
<dbReference type="NCBIfam" id="TIGR01313">
    <property type="entry name" value="therm_gnt_kin"/>
    <property type="match status" value="1"/>
</dbReference>
<dbReference type="PANTHER" id="PTHR43442">
    <property type="entry name" value="GLUCONOKINASE-RELATED"/>
    <property type="match status" value="1"/>
</dbReference>
<dbReference type="PANTHER" id="PTHR43442:SF3">
    <property type="entry name" value="GLUCONOKINASE-RELATED"/>
    <property type="match status" value="1"/>
</dbReference>
<dbReference type="Pfam" id="PF01202">
    <property type="entry name" value="SKI"/>
    <property type="match status" value="1"/>
</dbReference>
<dbReference type="PRINTS" id="PR01100">
    <property type="entry name" value="SHIKIMTKNASE"/>
</dbReference>
<dbReference type="SUPFAM" id="SSF52540">
    <property type="entry name" value="P-loop containing nucleoside triphosphate hydrolases"/>
    <property type="match status" value="1"/>
</dbReference>
<organism>
    <name type="scientific">Arabidopsis thaliana</name>
    <name type="common">Mouse-ear cress</name>
    <dbReference type="NCBI Taxonomy" id="3702"/>
    <lineage>
        <taxon>Eukaryota</taxon>
        <taxon>Viridiplantae</taxon>
        <taxon>Streptophyta</taxon>
        <taxon>Embryophyta</taxon>
        <taxon>Tracheophyta</taxon>
        <taxon>Spermatophyta</taxon>
        <taxon>Magnoliopsida</taxon>
        <taxon>eudicotyledons</taxon>
        <taxon>Gunneridae</taxon>
        <taxon>Pentapetalae</taxon>
        <taxon>rosids</taxon>
        <taxon>malvids</taxon>
        <taxon>Brassicales</taxon>
        <taxon>Brassicaceae</taxon>
        <taxon>Camelineae</taxon>
        <taxon>Arabidopsis</taxon>
    </lineage>
</organism>
<keyword id="KW-0067">ATP-binding</keyword>
<keyword id="KW-0311">Gluconate utilization</keyword>
<keyword id="KW-0378">Hydrolase</keyword>
<keyword id="KW-0418">Kinase</keyword>
<keyword id="KW-0547">Nucleotide-binding</keyword>
<keyword id="KW-1185">Reference proteome</keyword>
<keyword id="KW-0808">Transferase</keyword>
<accession>Q9SLE0</accession>
<accession>Q8LDN6</accession>
<feature type="chain" id="PRO_0000441919" description="Gluconokinase">
    <location>
        <begin position="1"/>
        <end position="189"/>
    </location>
</feature>
<feature type="binding site" evidence="2">
    <location>
        <begin position="16"/>
        <end position="23"/>
    </location>
    <ligand>
        <name>ATP</name>
        <dbReference type="ChEBI" id="CHEBI:30616"/>
    </ligand>
</feature>
<feature type="sequence conflict" description="In Ref. 3; AAM63104." evidence="4" ref="3">
    <original>A</original>
    <variation>V</variation>
    <location>
        <position position="13"/>
    </location>
</feature>
<feature type="sequence conflict" description="In Ref. 3; AAM63104." evidence="4" ref="3">
    <original>G</original>
    <variation>V</variation>
    <location>
        <position position="81"/>
    </location>
</feature>